<accession>O62820</accession>
<reference key="1">
    <citation type="journal article" date="1999" name="Gene">
        <title>Sequence and characterization of cDNA encoding the motilin precursor from chicken, dog, cow and horse. Evidence of mosaic evolution in prepromotilin.</title>
        <authorList>
            <person name="Huang Z."/>
            <person name="Depoortere I."/>
            <person name="De Clercq P."/>
            <person name="Peeters T."/>
        </authorList>
    </citation>
    <scope>NUCLEOTIDE SEQUENCE [MRNA]</scope>
    <source>
        <tissue>Duodenal mucosa</tissue>
    </source>
</reference>
<feature type="signal peptide" evidence="1">
    <location>
        <begin position="1"/>
        <end position="25"/>
    </location>
</feature>
<feature type="chain" id="PRO_0000342167" description="Promotilin">
    <location>
        <begin position="26"/>
        <end position="115"/>
    </location>
</feature>
<feature type="peptide" id="PRO_0000019176" description="Motilin">
    <location>
        <begin position="26"/>
        <end position="47"/>
    </location>
</feature>
<feature type="peptide" id="PRO_0000019177" description="Motilin-associated peptide">
    <location>
        <begin position="50"/>
        <end position="115"/>
    </location>
</feature>
<feature type="region of interest" description="Disordered" evidence="2">
    <location>
        <begin position="43"/>
        <end position="72"/>
    </location>
</feature>
<dbReference type="EMBL" id="AF068196">
    <property type="protein sequence ID" value="AAC18864.1"/>
    <property type="molecule type" value="mRNA"/>
</dbReference>
<dbReference type="RefSeq" id="NP_776363.1">
    <property type="nucleotide sequence ID" value="NM_173938.2"/>
</dbReference>
<dbReference type="FunCoup" id="O62820">
    <property type="interactions" value="39"/>
</dbReference>
<dbReference type="STRING" id="9913.ENSBTAP00000020661"/>
<dbReference type="PaxDb" id="9913-ENSBTAP00000020661"/>
<dbReference type="GeneID" id="280860"/>
<dbReference type="KEGG" id="bta:280860"/>
<dbReference type="CTD" id="4295"/>
<dbReference type="eggNOG" id="ENOG502SS7F">
    <property type="taxonomic scope" value="Eukaryota"/>
</dbReference>
<dbReference type="InParanoid" id="O62820"/>
<dbReference type="OrthoDB" id="9937685at2759"/>
<dbReference type="Proteomes" id="UP000009136">
    <property type="component" value="Unplaced"/>
</dbReference>
<dbReference type="GO" id="GO:0005576">
    <property type="term" value="C:extracellular region"/>
    <property type="evidence" value="ECO:0007669"/>
    <property type="project" value="UniProtKB-SubCell"/>
</dbReference>
<dbReference type="GO" id="GO:0005179">
    <property type="term" value="F:hormone activity"/>
    <property type="evidence" value="ECO:0007669"/>
    <property type="project" value="UniProtKB-KW"/>
</dbReference>
<dbReference type="GO" id="GO:0031788">
    <property type="term" value="F:motilin receptor binding"/>
    <property type="evidence" value="ECO:0000318"/>
    <property type="project" value="GO_Central"/>
</dbReference>
<dbReference type="InterPro" id="IPR006737">
    <property type="entry name" value="Motilin_assoc"/>
</dbReference>
<dbReference type="InterPro" id="IPR006738">
    <property type="entry name" value="Motilin_ghrelin"/>
</dbReference>
<dbReference type="InterPro" id="IPR015662">
    <property type="entry name" value="Promotilin"/>
</dbReference>
<dbReference type="PANTHER" id="PTHR14156">
    <property type="entry name" value="MOTILIN"/>
    <property type="match status" value="1"/>
</dbReference>
<dbReference type="PANTHER" id="PTHR14156:SF0">
    <property type="entry name" value="PROMOTILIN"/>
    <property type="match status" value="1"/>
</dbReference>
<dbReference type="Pfam" id="PF04643">
    <property type="entry name" value="Motilin_assoc"/>
    <property type="match status" value="1"/>
</dbReference>
<dbReference type="Pfam" id="PF04644">
    <property type="entry name" value="Motilin_ghrelin"/>
    <property type="match status" value="1"/>
</dbReference>
<name>MOTI_BOVIN</name>
<gene>
    <name type="primary">MLN</name>
</gene>
<evidence type="ECO:0000250" key="1"/>
<evidence type="ECO:0000256" key="2">
    <source>
        <dbReference type="SAM" id="MobiDB-lite"/>
    </source>
</evidence>
<evidence type="ECO:0000305" key="3"/>
<comment type="function">
    <text evidence="1">Plays an important role in the regulation of interdigestive gastrointestinal motility and indirectly causes rhythmic contraction of duodenal and colonic smooth muscle.</text>
</comment>
<comment type="subcellular location">
    <subcellularLocation>
        <location>Secreted</location>
    </subcellularLocation>
</comment>
<comment type="similarity">
    <text evidence="3">Belongs to the motilin family.</text>
</comment>
<proteinExistence type="inferred from homology"/>
<organism>
    <name type="scientific">Bos taurus</name>
    <name type="common">Bovine</name>
    <dbReference type="NCBI Taxonomy" id="9913"/>
    <lineage>
        <taxon>Eukaryota</taxon>
        <taxon>Metazoa</taxon>
        <taxon>Chordata</taxon>
        <taxon>Craniata</taxon>
        <taxon>Vertebrata</taxon>
        <taxon>Euteleostomi</taxon>
        <taxon>Mammalia</taxon>
        <taxon>Eutheria</taxon>
        <taxon>Laurasiatheria</taxon>
        <taxon>Artiodactyla</taxon>
        <taxon>Ruminantia</taxon>
        <taxon>Pecora</taxon>
        <taxon>Bovidae</taxon>
        <taxon>Bovinae</taxon>
        <taxon>Bos</taxon>
    </lineage>
</organism>
<protein>
    <recommendedName>
        <fullName>Promotilin</fullName>
    </recommendedName>
    <component>
        <recommendedName>
            <fullName>Motilin</fullName>
        </recommendedName>
    </component>
    <component>
        <recommendedName>
            <fullName>Motilin-associated peptide</fullName>
            <shortName>MAP</shortName>
        </recommendedName>
    </component>
</protein>
<sequence>MLSRKATAVLLAVHAAAMLASQTEAFVPIFTYGEVRRMQEKERYKGQKKSLSVQQRSEEVGPVDPTEPWEEKQEVIKLTAPVEIGMRMNSRQLEKYQATLEGLLREVLPPSRNAQ</sequence>
<keyword id="KW-0165">Cleavage on pair of basic residues</keyword>
<keyword id="KW-0372">Hormone</keyword>
<keyword id="KW-1185">Reference proteome</keyword>
<keyword id="KW-0964">Secreted</keyword>
<keyword id="KW-0732">Signal</keyword>